<dbReference type="EMBL" id="L77117">
    <property type="protein sequence ID" value="AAB98917.1"/>
    <property type="molecule type" value="Genomic_DNA"/>
</dbReference>
<dbReference type="PIR" id="H64413">
    <property type="entry name" value="H64413"/>
</dbReference>
<dbReference type="SMR" id="Q58322"/>
<dbReference type="STRING" id="243232.MJ_0912"/>
<dbReference type="PaxDb" id="243232-MJ_0912"/>
<dbReference type="EnsemblBacteria" id="AAB98917">
    <property type="protein sequence ID" value="AAB98917"/>
    <property type="gene ID" value="MJ_0912"/>
</dbReference>
<dbReference type="KEGG" id="mja:MJ_0912"/>
<dbReference type="eggNOG" id="arCOG01143">
    <property type="taxonomic scope" value="Archaea"/>
</dbReference>
<dbReference type="HOGENOM" id="CLU_074761_0_1_2"/>
<dbReference type="InParanoid" id="Q58322"/>
<dbReference type="PhylomeDB" id="Q58322"/>
<dbReference type="Proteomes" id="UP000000805">
    <property type="component" value="Chromosome"/>
</dbReference>
<dbReference type="GO" id="GO:0005737">
    <property type="term" value="C:cytoplasm"/>
    <property type="evidence" value="ECO:0000318"/>
    <property type="project" value="GO_Central"/>
</dbReference>
<dbReference type="GO" id="GO:0016791">
    <property type="term" value="F:phosphatase activity"/>
    <property type="evidence" value="ECO:0000318"/>
    <property type="project" value="GO_Central"/>
</dbReference>
<dbReference type="Gene3D" id="3.60.21.10">
    <property type="match status" value="1"/>
</dbReference>
<dbReference type="InterPro" id="IPR050126">
    <property type="entry name" value="Ap4A_hydrolase"/>
</dbReference>
<dbReference type="InterPro" id="IPR024654">
    <property type="entry name" value="Calcineurin-like_PHP_lpxH"/>
</dbReference>
<dbReference type="InterPro" id="IPR029052">
    <property type="entry name" value="Metallo-depent_PP-like"/>
</dbReference>
<dbReference type="InterPro" id="IPR011152">
    <property type="entry name" value="Pesterase_MJ0912"/>
</dbReference>
<dbReference type="PANTHER" id="PTHR42850:SF2">
    <property type="entry name" value="BLL5683 PROTEIN"/>
    <property type="match status" value="1"/>
</dbReference>
<dbReference type="PANTHER" id="PTHR42850">
    <property type="entry name" value="METALLOPHOSPHOESTERASE"/>
    <property type="match status" value="1"/>
</dbReference>
<dbReference type="Pfam" id="PF12850">
    <property type="entry name" value="Metallophos_2"/>
    <property type="match status" value="1"/>
</dbReference>
<dbReference type="PIRSF" id="PIRSF000883">
    <property type="entry name" value="Pesterase_MJ0912"/>
    <property type="match status" value="1"/>
</dbReference>
<dbReference type="SUPFAM" id="SSF56300">
    <property type="entry name" value="Metallo-dependent phosphatases"/>
    <property type="match status" value="1"/>
</dbReference>
<feature type="chain" id="PRO_0000107101" description="Uncharacterized protein MJ0912">
    <location>
        <begin position="1"/>
        <end position="243"/>
    </location>
</feature>
<name>Y912_METJA</name>
<reference key="1">
    <citation type="journal article" date="1996" name="Science">
        <title>Complete genome sequence of the methanogenic archaeon, Methanococcus jannaschii.</title>
        <authorList>
            <person name="Bult C.J."/>
            <person name="White O."/>
            <person name="Olsen G.J."/>
            <person name="Zhou L."/>
            <person name="Fleischmann R.D."/>
            <person name="Sutton G.G."/>
            <person name="Blake J.A."/>
            <person name="FitzGerald L.M."/>
            <person name="Clayton R.A."/>
            <person name="Gocayne J.D."/>
            <person name="Kerlavage A.R."/>
            <person name="Dougherty B.A."/>
            <person name="Tomb J.-F."/>
            <person name="Adams M.D."/>
            <person name="Reich C.I."/>
            <person name="Overbeek R."/>
            <person name="Kirkness E.F."/>
            <person name="Weinstock K.G."/>
            <person name="Merrick J.M."/>
            <person name="Glodek A."/>
            <person name="Scott J.L."/>
            <person name="Geoghagen N.S.M."/>
            <person name="Weidman J.F."/>
            <person name="Fuhrmann J.L."/>
            <person name="Nguyen D."/>
            <person name="Utterback T.R."/>
            <person name="Kelley J.M."/>
            <person name="Peterson J.D."/>
            <person name="Sadow P.W."/>
            <person name="Hanna M.C."/>
            <person name="Cotton M.D."/>
            <person name="Roberts K.M."/>
            <person name="Hurst M.A."/>
            <person name="Kaine B.P."/>
            <person name="Borodovsky M."/>
            <person name="Klenk H.-P."/>
            <person name="Fraser C.M."/>
            <person name="Smith H.O."/>
            <person name="Woese C.R."/>
            <person name="Venter J.C."/>
        </authorList>
    </citation>
    <scope>NUCLEOTIDE SEQUENCE [LARGE SCALE GENOMIC DNA]</scope>
    <source>
        <strain>ATCC 43067 / DSM 2661 / JAL-1 / JCM 10045 / NBRC 100440</strain>
    </source>
</reference>
<proteinExistence type="predicted"/>
<organism>
    <name type="scientific">Methanocaldococcus jannaschii (strain ATCC 43067 / DSM 2661 / JAL-1 / JCM 10045 / NBRC 100440)</name>
    <name type="common">Methanococcus jannaschii</name>
    <dbReference type="NCBI Taxonomy" id="243232"/>
    <lineage>
        <taxon>Archaea</taxon>
        <taxon>Methanobacteriati</taxon>
        <taxon>Methanobacteriota</taxon>
        <taxon>Methanomada group</taxon>
        <taxon>Methanococci</taxon>
        <taxon>Methanococcales</taxon>
        <taxon>Methanocaldococcaceae</taxon>
        <taxon>Methanocaldococcus</taxon>
    </lineage>
</organism>
<gene>
    <name type="ordered locus">MJ0912</name>
</gene>
<accession>Q58322</accession>
<keyword id="KW-1185">Reference proteome</keyword>
<sequence length="243" mass="27819">MVKSMIAVISDIHSNLEALNAVLNDIKNRGIKKIFCLGDIVGYGANPNECVELIRDLNCLSVVGNHDYGVLGKESLDYFNKYGAIAILWTKKVIKNENLKFLDSLPLIIEENIKGKKVIFSHANPKHPEIWEYLFPDYVDDVFNYGDLIFVGHSHIPFVNSEEGNLLLHEGKIYLDEDKKYLINPGSVGQPRDGINKASYCIFDEKDFKIEIVRVEYDIKKAYEKIVKNRLPEWLGERLFLGR</sequence>
<protein>
    <recommendedName>
        <fullName>Uncharacterized protein MJ0912</fullName>
    </recommendedName>
</protein>